<reference key="1">
    <citation type="journal article" date="1994" name="Biochem. Biophys. Res. Commun.">
        <title>Characterization of one novel venom protease with beta-fibrinogenase activity from the Taiwan habu (Trimeresurus mucrosquamatus): purification and cDNA sequence analysis.</title>
        <authorList>
            <person name="Hung C.-C."/>
            <person name="Huang K.F."/>
            <person name="Chiou S.-H."/>
        </authorList>
    </citation>
    <scope>NUCLEOTIDE SEQUENCE [MRNA]</scope>
    <scope>FUNCTION</scope>
    <scope>SUBUNIT</scope>
    <source>
        <tissue>Venom</tissue>
        <tissue>Venom gland</tissue>
    </source>
</reference>
<name>VSP4_PROMU</name>
<sequence>MVLIRVLANLLILQLSYAQKSSELVIGGDECNINEHPFLVLVYYDDYQCGGTLINEEWVLTAAHCNGENMEIYLGMHSKKVPNKDRRRRVPKEKFFCDSSKTYTKWNKDIMLIRLDRPVRKSAHIAPLSLPSSPPSVGSVCRVMGWGTITSPQVTLPDVPRCANINLLDYEVCRAAYPELPATSRTLCAGILEGGKDSCGGDSGGPLICNGQFQGIVSWGGDPCAQPHEPGLYTNVFDHLDWIKGFIAGNTDVTCPP</sequence>
<proteinExistence type="evidence at protein level"/>
<evidence type="ECO:0000250" key="1"/>
<evidence type="ECO:0000255" key="2">
    <source>
        <dbReference type="PROSITE-ProRule" id="PRU00274"/>
    </source>
</evidence>
<evidence type="ECO:0000269" key="3">
    <source>
    </source>
</evidence>
<evidence type="ECO:0000305" key="4">
    <source>
    </source>
</evidence>
<organism>
    <name type="scientific">Protobothrops mucrosquamatus</name>
    <name type="common">Taiwan habu</name>
    <name type="synonym">Trimeresurus mucrosquamatus</name>
    <dbReference type="NCBI Taxonomy" id="103944"/>
    <lineage>
        <taxon>Eukaryota</taxon>
        <taxon>Metazoa</taxon>
        <taxon>Chordata</taxon>
        <taxon>Craniata</taxon>
        <taxon>Vertebrata</taxon>
        <taxon>Euteleostomi</taxon>
        <taxon>Lepidosauria</taxon>
        <taxon>Squamata</taxon>
        <taxon>Bifurcata</taxon>
        <taxon>Unidentata</taxon>
        <taxon>Episquamata</taxon>
        <taxon>Toxicofera</taxon>
        <taxon>Serpentes</taxon>
        <taxon>Colubroidea</taxon>
        <taxon>Viperidae</taxon>
        <taxon>Crotalinae</taxon>
        <taxon>Protobothrops</taxon>
    </lineage>
</organism>
<comment type="function">
    <text evidence="3">Snake venom serine protease with fibrinogenolytic activities. Cleaves beta-chain of fibrinogen (FGB) efficiently and shows relatively lower activity on alpha-chain.</text>
</comment>
<comment type="subunit">
    <text evidence="3">Monomer.</text>
</comment>
<comment type="subcellular location">
    <subcellularLocation>
        <location>Secreted</location>
    </subcellularLocation>
</comment>
<comment type="tissue specificity">
    <text>Expressed by the venom gland.</text>
</comment>
<comment type="miscellaneous">
    <text evidence="4">Negative results: does not have activity on gamma-chains of fibrinogen (FGG).</text>
</comment>
<comment type="similarity">
    <text evidence="2">Belongs to the peptidase S1 family. Snake venom subfamily.</text>
</comment>
<dbReference type="EC" id="3.4.21.-"/>
<dbReference type="EMBL" id="X83224">
    <property type="protein sequence ID" value="CAA58224.1"/>
    <property type="molecule type" value="mRNA"/>
</dbReference>
<dbReference type="SMR" id="Q91510"/>
<dbReference type="MEROPS" id="S01.344"/>
<dbReference type="MEROPS" id="S01.345"/>
<dbReference type="GO" id="GO:0005576">
    <property type="term" value="C:extracellular region"/>
    <property type="evidence" value="ECO:0007669"/>
    <property type="project" value="UniProtKB-SubCell"/>
</dbReference>
<dbReference type="GO" id="GO:0030141">
    <property type="term" value="C:secretory granule"/>
    <property type="evidence" value="ECO:0007669"/>
    <property type="project" value="TreeGrafter"/>
</dbReference>
<dbReference type="GO" id="GO:0004252">
    <property type="term" value="F:serine-type endopeptidase activity"/>
    <property type="evidence" value="ECO:0007669"/>
    <property type="project" value="InterPro"/>
</dbReference>
<dbReference type="GO" id="GO:0090729">
    <property type="term" value="F:toxin activity"/>
    <property type="evidence" value="ECO:0007669"/>
    <property type="project" value="UniProtKB-KW"/>
</dbReference>
<dbReference type="GO" id="GO:0006508">
    <property type="term" value="P:proteolysis"/>
    <property type="evidence" value="ECO:0007669"/>
    <property type="project" value="UniProtKB-KW"/>
</dbReference>
<dbReference type="CDD" id="cd00190">
    <property type="entry name" value="Tryp_SPc"/>
    <property type="match status" value="1"/>
</dbReference>
<dbReference type="FunFam" id="2.40.10.10:FF:000158">
    <property type="entry name" value="Thrombin-like enzyme saxthrombin"/>
    <property type="match status" value="1"/>
</dbReference>
<dbReference type="FunFam" id="2.40.10.10:FF:000153">
    <property type="entry name" value="Venom plasminogen activator TSV-PA"/>
    <property type="match status" value="1"/>
</dbReference>
<dbReference type="Gene3D" id="2.40.10.10">
    <property type="entry name" value="Trypsin-like serine proteases"/>
    <property type="match status" value="2"/>
</dbReference>
<dbReference type="InterPro" id="IPR009003">
    <property type="entry name" value="Peptidase_S1_PA"/>
</dbReference>
<dbReference type="InterPro" id="IPR043504">
    <property type="entry name" value="Peptidase_S1_PA_chymotrypsin"/>
</dbReference>
<dbReference type="InterPro" id="IPR001314">
    <property type="entry name" value="Peptidase_S1A"/>
</dbReference>
<dbReference type="InterPro" id="IPR001254">
    <property type="entry name" value="Trypsin_dom"/>
</dbReference>
<dbReference type="InterPro" id="IPR018114">
    <property type="entry name" value="TRYPSIN_HIS"/>
</dbReference>
<dbReference type="InterPro" id="IPR033116">
    <property type="entry name" value="TRYPSIN_SER"/>
</dbReference>
<dbReference type="PANTHER" id="PTHR24271:SF47">
    <property type="entry name" value="KALLIKREIN-1"/>
    <property type="match status" value="1"/>
</dbReference>
<dbReference type="PANTHER" id="PTHR24271">
    <property type="entry name" value="KALLIKREIN-RELATED"/>
    <property type="match status" value="1"/>
</dbReference>
<dbReference type="Pfam" id="PF00089">
    <property type="entry name" value="Trypsin"/>
    <property type="match status" value="1"/>
</dbReference>
<dbReference type="PRINTS" id="PR00722">
    <property type="entry name" value="CHYMOTRYPSIN"/>
</dbReference>
<dbReference type="SMART" id="SM00020">
    <property type="entry name" value="Tryp_SPc"/>
    <property type="match status" value="1"/>
</dbReference>
<dbReference type="SUPFAM" id="SSF50494">
    <property type="entry name" value="Trypsin-like serine proteases"/>
    <property type="match status" value="1"/>
</dbReference>
<dbReference type="PROSITE" id="PS50240">
    <property type="entry name" value="TRYPSIN_DOM"/>
    <property type="match status" value="1"/>
</dbReference>
<dbReference type="PROSITE" id="PS00134">
    <property type="entry name" value="TRYPSIN_HIS"/>
    <property type="match status" value="1"/>
</dbReference>
<dbReference type="PROSITE" id="PS00135">
    <property type="entry name" value="TRYPSIN_SER"/>
    <property type="match status" value="1"/>
</dbReference>
<keyword id="KW-1015">Disulfide bond</keyword>
<keyword id="KW-1206">Fibrinogenolytic toxin</keyword>
<keyword id="KW-1199">Hemostasis impairing toxin</keyword>
<keyword id="KW-0378">Hydrolase</keyword>
<keyword id="KW-0645">Protease</keyword>
<keyword id="KW-0964">Secreted</keyword>
<keyword id="KW-0720">Serine protease</keyword>
<keyword id="KW-0732">Signal</keyword>
<keyword id="KW-0800">Toxin</keyword>
<keyword id="KW-0865">Zymogen</keyword>
<feature type="signal peptide" evidence="1">
    <location>
        <begin position="1"/>
        <end position="18"/>
    </location>
</feature>
<feature type="propeptide" id="PRO_0000028413" evidence="1">
    <location>
        <begin position="19"/>
        <end position="24"/>
    </location>
</feature>
<feature type="chain" id="PRO_0000028414" description="Beta-fibrinogenase mucrofibrase-4">
    <location>
        <begin position="25"/>
        <end position="257"/>
    </location>
</feature>
<feature type="domain" description="Peptidase S1" evidence="2">
    <location>
        <begin position="25"/>
        <end position="248"/>
    </location>
</feature>
<feature type="active site" description="Charge relay system" evidence="1">
    <location>
        <position position="64"/>
    </location>
</feature>
<feature type="active site" description="Charge relay system" evidence="1">
    <location>
        <position position="109"/>
    </location>
</feature>
<feature type="active site" description="Charge relay system" evidence="1">
    <location>
        <position position="203"/>
    </location>
</feature>
<feature type="disulfide bond" evidence="2">
    <location>
        <begin position="31"/>
        <end position="162"/>
    </location>
</feature>
<feature type="disulfide bond" evidence="2">
    <location>
        <begin position="49"/>
        <end position="65"/>
    </location>
</feature>
<feature type="disulfide bond" evidence="2">
    <location>
        <begin position="97"/>
        <end position="255"/>
    </location>
</feature>
<feature type="disulfide bond" evidence="2">
    <location>
        <begin position="141"/>
        <end position="209"/>
    </location>
</feature>
<feature type="disulfide bond" evidence="2">
    <location>
        <begin position="173"/>
        <end position="188"/>
    </location>
</feature>
<feature type="disulfide bond" evidence="2">
    <location>
        <begin position="199"/>
        <end position="224"/>
    </location>
</feature>
<accession>Q91510</accession>
<protein>
    <recommendedName>
        <fullName>Beta-fibrinogenase mucrofibrase-4</fullName>
        <ecNumber>3.4.21.-</ecNumber>
    </recommendedName>
    <alternativeName>
        <fullName>Snake venom serine protease</fullName>
        <shortName>SVSP</shortName>
    </alternativeName>
</protein>